<dbReference type="EC" id="3.1.15.-" evidence="1"/>
<dbReference type="EMBL" id="CP000611">
    <property type="protein sequence ID" value="ABQ74308.1"/>
    <property type="molecule type" value="Genomic_DNA"/>
</dbReference>
<dbReference type="RefSeq" id="WP_003899361.1">
    <property type="nucleotide sequence ID" value="NZ_CP016972.1"/>
</dbReference>
<dbReference type="SMR" id="A5U5K8"/>
<dbReference type="GeneID" id="45426505"/>
<dbReference type="KEGG" id="mra:MRA_2537"/>
<dbReference type="eggNOG" id="COG1949">
    <property type="taxonomic scope" value="Bacteria"/>
</dbReference>
<dbReference type="HOGENOM" id="CLU_064761_3_0_11"/>
<dbReference type="Proteomes" id="UP000001988">
    <property type="component" value="Chromosome"/>
</dbReference>
<dbReference type="GO" id="GO:0005737">
    <property type="term" value="C:cytoplasm"/>
    <property type="evidence" value="ECO:0007669"/>
    <property type="project" value="UniProtKB-SubCell"/>
</dbReference>
<dbReference type="GO" id="GO:0000175">
    <property type="term" value="F:3'-5'-RNA exonuclease activity"/>
    <property type="evidence" value="ECO:0007669"/>
    <property type="project" value="InterPro"/>
</dbReference>
<dbReference type="GO" id="GO:0003676">
    <property type="term" value="F:nucleic acid binding"/>
    <property type="evidence" value="ECO:0007669"/>
    <property type="project" value="InterPro"/>
</dbReference>
<dbReference type="CDD" id="cd06135">
    <property type="entry name" value="Orn"/>
    <property type="match status" value="1"/>
</dbReference>
<dbReference type="FunFam" id="3.30.420.10:FF:000003">
    <property type="entry name" value="Oligoribonuclease"/>
    <property type="match status" value="1"/>
</dbReference>
<dbReference type="Gene3D" id="3.30.420.10">
    <property type="entry name" value="Ribonuclease H-like superfamily/Ribonuclease H"/>
    <property type="match status" value="1"/>
</dbReference>
<dbReference type="HAMAP" id="MF_00045">
    <property type="entry name" value="Oligoribonuclease"/>
    <property type="match status" value="1"/>
</dbReference>
<dbReference type="InterPro" id="IPR013520">
    <property type="entry name" value="Exonuclease_RNaseT/DNA_pol3"/>
</dbReference>
<dbReference type="InterPro" id="IPR022894">
    <property type="entry name" value="Oligoribonuclease"/>
</dbReference>
<dbReference type="InterPro" id="IPR012337">
    <property type="entry name" value="RNaseH-like_sf"/>
</dbReference>
<dbReference type="InterPro" id="IPR036397">
    <property type="entry name" value="RNaseH_sf"/>
</dbReference>
<dbReference type="NCBIfam" id="NF003765">
    <property type="entry name" value="PRK05359.1"/>
    <property type="match status" value="1"/>
</dbReference>
<dbReference type="PANTHER" id="PTHR11046">
    <property type="entry name" value="OLIGORIBONUCLEASE, MITOCHONDRIAL"/>
    <property type="match status" value="1"/>
</dbReference>
<dbReference type="PANTHER" id="PTHR11046:SF0">
    <property type="entry name" value="OLIGORIBONUCLEASE, MITOCHONDRIAL"/>
    <property type="match status" value="1"/>
</dbReference>
<dbReference type="Pfam" id="PF00929">
    <property type="entry name" value="RNase_T"/>
    <property type="match status" value="1"/>
</dbReference>
<dbReference type="SMART" id="SM00479">
    <property type="entry name" value="EXOIII"/>
    <property type="match status" value="1"/>
</dbReference>
<dbReference type="SUPFAM" id="SSF53098">
    <property type="entry name" value="Ribonuclease H-like"/>
    <property type="match status" value="1"/>
</dbReference>
<keyword id="KW-0963">Cytoplasm</keyword>
<keyword id="KW-0269">Exonuclease</keyword>
<keyword id="KW-0378">Hydrolase</keyword>
<keyword id="KW-0540">Nuclease</keyword>
<keyword id="KW-1185">Reference proteome</keyword>
<comment type="function">
    <text evidence="1">3'-to-5' exoribonuclease specific for small oligoribonucleotides.</text>
</comment>
<comment type="subcellular location">
    <subcellularLocation>
        <location evidence="1">Cytoplasm</location>
    </subcellularLocation>
</comment>
<comment type="similarity">
    <text evidence="1">Belongs to the oligoribonuclease family.</text>
</comment>
<reference key="1">
    <citation type="journal article" date="2008" name="PLoS ONE">
        <title>Genetic basis of virulence attenuation revealed by comparative genomic analysis of Mycobacterium tuberculosis strain H37Ra versus H37Rv.</title>
        <authorList>
            <person name="Zheng H."/>
            <person name="Lu L."/>
            <person name="Wang B."/>
            <person name="Pu S."/>
            <person name="Zhang X."/>
            <person name="Zhu G."/>
            <person name="Shi W."/>
            <person name="Zhang L."/>
            <person name="Wang H."/>
            <person name="Wang S."/>
            <person name="Zhao G."/>
            <person name="Zhang Y."/>
        </authorList>
    </citation>
    <scope>NUCLEOTIDE SEQUENCE [LARGE SCALE GENOMIC DNA]</scope>
    <source>
        <strain>ATCC 25177 / H37Ra</strain>
    </source>
</reference>
<sequence>MQDELVWIDCEMTGLDLGSDKLIEIAALVTDADLNILGDGVDVVMHADDAALSGMIDVVAEMHSRSGLIDEVKASTVDLATAEAMVLDYINEHVKQPKTAPLAGNSIATDRAFIARDMPTLDSFLHYRMIDVSSIKELCRRWYPRIYFGQPPKGLTHRALADIHESIRELRFYRRTAFVPQPGPSTSEIAAVVAELSDGAGAQEETDSAEAPQSG</sequence>
<evidence type="ECO:0000255" key="1">
    <source>
        <dbReference type="HAMAP-Rule" id="MF_00045"/>
    </source>
</evidence>
<evidence type="ECO:0000256" key="2">
    <source>
        <dbReference type="SAM" id="MobiDB-lite"/>
    </source>
</evidence>
<feature type="chain" id="PRO_1000004265" description="Oligoribonuclease">
    <location>
        <begin position="1"/>
        <end position="215"/>
    </location>
</feature>
<feature type="domain" description="Exonuclease" evidence="1">
    <location>
        <begin position="5"/>
        <end position="170"/>
    </location>
</feature>
<feature type="region of interest" description="Disordered" evidence="2">
    <location>
        <begin position="196"/>
        <end position="215"/>
    </location>
</feature>
<feature type="active site" evidence="1">
    <location>
        <position position="127"/>
    </location>
</feature>
<organism>
    <name type="scientific">Mycobacterium tuberculosis (strain ATCC 25177 / H37Ra)</name>
    <dbReference type="NCBI Taxonomy" id="419947"/>
    <lineage>
        <taxon>Bacteria</taxon>
        <taxon>Bacillati</taxon>
        <taxon>Actinomycetota</taxon>
        <taxon>Actinomycetes</taxon>
        <taxon>Mycobacteriales</taxon>
        <taxon>Mycobacteriaceae</taxon>
        <taxon>Mycobacterium</taxon>
        <taxon>Mycobacterium tuberculosis complex</taxon>
    </lineage>
</organism>
<gene>
    <name evidence="1" type="primary">orn</name>
    <name type="ordered locus">MRA_2537</name>
</gene>
<proteinExistence type="inferred from homology"/>
<protein>
    <recommendedName>
        <fullName evidence="1">Oligoribonuclease</fullName>
        <ecNumber evidence="1">3.1.15.-</ecNumber>
    </recommendedName>
</protein>
<accession>A5U5K8</accession>
<name>ORN_MYCTA</name>